<keyword id="KW-0520">NAD</keyword>
<keyword id="KW-0560">Oxidoreductase</keyword>
<evidence type="ECO:0000250" key="1"/>
<evidence type="ECO:0000255" key="2">
    <source>
        <dbReference type="PROSITE-ProRule" id="PRU10001"/>
    </source>
</evidence>
<evidence type="ECO:0000305" key="3"/>
<accession>Q00669</accession>
<feature type="initiator methionine" description="Removed" evidence="1">
    <location>
        <position position="1"/>
    </location>
</feature>
<feature type="chain" id="PRO_0000054451" description="Alcohol dehydrogenase">
    <location>
        <begin position="2"/>
        <end position="254"/>
    </location>
</feature>
<feature type="active site" description="Proton acceptor" evidence="2">
    <location>
        <position position="151"/>
    </location>
</feature>
<feature type="binding site" evidence="1">
    <location>
        <begin position="10"/>
        <end position="33"/>
    </location>
    <ligand>
        <name>NAD(+)</name>
        <dbReference type="ChEBI" id="CHEBI:57540"/>
    </ligand>
</feature>
<feature type="binding site" evidence="1">
    <location>
        <position position="138"/>
    </location>
    <ligand>
        <name>substrate</name>
    </ligand>
</feature>
<protein>
    <recommendedName>
        <fullName>Alcohol dehydrogenase</fullName>
        <ecNumber>1.1.1.1</ecNumber>
    </recommendedName>
</protein>
<comment type="catalytic activity">
    <reaction evidence="2">
        <text>a primary alcohol + NAD(+) = an aldehyde + NADH + H(+)</text>
        <dbReference type="Rhea" id="RHEA:10736"/>
        <dbReference type="ChEBI" id="CHEBI:15378"/>
        <dbReference type="ChEBI" id="CHEBI:15734"/>
        <dbReference type="ChEBI" id="CHEBI:17478"/>
        <dbReference type="ChEBI" id="CHEBI:57540"/>
        <dbReference type="ChEBI" id="CHEBI:57945"/>
        <dbReference type="EC" id="1.1.1.1"/>
    </reaction>
</comment>
<comment type="catalytic activity">
    <reaction evidence="2">
        <text>a secondary alcohol + NAD(+) = a ketone + NADH + H(+)</text>
        <dbReference type="Rhea" id="RHEA:10740"/>
        <dbReference type="ChEBI" id="CHEBI:15378"/>
        <dbReference type="ChEBI" id="CHEBI:17087"/>
        <dbReference type="ChEBI" id="CHEBI:35681"/>
        <dbReference type="ChEBI" id="CHEBI:57540"/>
        <dbReference type="ChEBI" id="CHEBI:57945"/>
        <dbReference type="EC" id="1.1.1.1"/>
    </reaction>
</comment>
<comment type="subunit">
    <text>Homodimer.</text>
</comment>
<comment type="similarity">
    <text evidence="3">Belongs to the short-chain dehydrogenases/reductases (SDR) family.</text>
</comment>
<sequence length="254" mass="27477">MVIANSNIIFVAGLGGIGLDTSREIVKSGPKNLVLLDRIDNPAAIAELSALNPKVTVTFYPYDVTVPLDETKKLLKTIFDKLKTVDLLINGAGILDDNQIERTIAVNFTGTVNTTTAIMDFWDKRKGGPGGVVANICSVTGFNSIYQVPVYSASKAAALSFTTSFRKLAGITGVTAYSINPGITKTVLVHKFNSWLGVEPRVAELLLEHPTQTTLQCGQNFVKAIEANQNGAIWKLDLGRLDAIEWTKHWDSGI</sequence>
<name>ADH_DROAD</name>
<proteinExistence type="inferred from homology"/>
<organism>
    <name type="scientific">Drosophila adiastola</name>
    <name type="common">Fruit fly</name>
    <name type="synonym">Idiomyia adiastola</name>
    <dbReference type="NCBI Taxonomy" id="7261"/>
    <lineage>
        <taxon>Eukaryota</taxon>
        <taxon>Metazoa</taxon>
        <taxon>Ecdysozoa</taxon>
        <taxon>Arthropoda</taxon>
        <taxon>Hexapoda</taxon>
        <taxon>Insecta</taxon>
        <taxon>Pterygota</taxon>
        <taxon>Neoptera</taxon>
        <taxon>Endopterygota</taxon>
        <taxon>Diptera</taxon>
        <taxon>Brachycera</taxon>
        <taxon>Muscomorpha</taxon>
        <taxon>Ephydroidea</taxon>
        <taxon>Drosophilidae</taxon>
        <taxon>Drosophila</taxon>
        <taxon>Hawaiian Drosophila</taxon>
    </lineage>
</organism>
<gene>
    <name type="primary">Adh</name>
</gene>
<reference key="1">
    <citation type="journal article" date="1991" name="Mol. Biol. Evol.">
        <title>The molecular evolution of the alcohol dehydrogenase locus and the phylogeny of Hawaiian Drosophila.</title>
        <authorList>
            <person name="Thomas R.H."/>
            <person name="Hunt J.A."/>
        </authorList>
    </citation>
    <scope>NUCLEOTIDE SEQUENCE [GENOMIC DNA]</scope>
</reference>
<dbReference type="EC" id="1.1.1.1"/>
<dbReference type="EMBL" id="M60791">
    <property type="protein sequence ID" value="AAA72980.1"/>
    <property type="molecule type" value="Genomic_DNA"/>
</dbReference>
<dbReference type="SMR" id="Q00669"/>
<dbReference type="GO" id="GO:0005737">
    <property type="term" value="C:cytoplasm"/>
    <property type="evidence" value="ECO:0007669"/>
    <property type="project" value="TreeGrafter"/>
</dbReference>
<dbReference type="GO" id="GO:0004022">
    <property type="term" value="F:alcohol dehydrogenase (NAD+) activity"/>
    <property type="evidence" value="ECO:0000250"/>
    <property type="project" value="UniProtKB"/>
</dbReference>
<dbReference type="GO" id="GO:0006066">
    <property type="term" value="P:alcohol metabolic process"/>
    <property type="evidence" value="ECO:0007669"/>
    <property type="project" value="InterPro"/>
</dbReference>
<dbReference type="CDD" id="cd05323">
    <property type="entry name" value="ADH_SDR_c_like"/>
    <property type="match status" value="1"/>
</dbReference>
<dbReference type="FunFam" id="3.40.50.720:FF:000302">
    <property type="entry name" value="Alcohol dehydrogenase"/>
    <property type="match status" value="1"/>
</dbReference>
<dbReference type="Gene3D" id="3.40.50.720">
    <property type="entry name" value="NAD(P)-binding Rossmann-like Domain"/>
    <property type="match status" value="1"/>
</dbReference>
<dbReference type="InterPro" id="IPR002425">
    <property type="entry name" value="ADH_Drosophila-type"/>
</dbReference>
<dbReference type="InterPro" id="IPR036291">
    <property type="entry name" value="NAD(P)-bd_dom_sf"/>
</dbReference>
<dbReference type="InterPro" id="IPR020904">
    <property type="entry name" value="Sc_DH/Rdtase_CS"/>
</dbReference>
<dbReference type="InterPro" id="IPR002347">
    <property type="entry name" value="SDR_fam"/>
</dbReference>
<dbReference type="PANTHER" id="PTHR44229">
    <property type="entry name" value="15-HYDROXYPROSTAGLANDIN DEHYDROGENASE [NAD(+)]"/>
    <property type="match status" value="1"/>
</dbReference>
<dbReference type="PANTHER" id="PTHR44229:SF8">
    <property type="entry name" value="ALCOHOL DEHYDROGENASE-RELATED"/>
    <property type="match status" value="1"/>
</dbReference>
<dbReference type="Pfam" id="PF00106">
    <property type="entry name" value="adh_short"/>
    <property type="match status" value="1"/>
</dbReference>
<dbReference type="PRINTS" id="PR01168">
    <property type="entry name" value="ALCDHDRGNASE"/>
</dbReference>
<dbReference type="PRINTS" id="PR01167">
    <property type="entry name" value="INSADHFAMILY"/>
</dbReference>
<dbReference type="PRINTS" id="PR00080">
    <property type="entry name" value="SDRFAMILY"/>
</dbReference>
<dbReference type="SUPFAM" id="SSF51735">
    <property type="entry name" value="NAD(P)-binding Rossmann-fold domains"/>
    <property type="match status" value="1"/>
</dbReference>
<dbReference type="PROSITE" id="PS00061">
    <property type="entry name" value="ADH_SHORT"/>
    <property type="match status" value="1"/>
</dbReference>